<keyword id="KW-0963">Cytoplasm</keyword>
<keyword id="KW-0489">Methyltransferase</keyword>
<keyword id="KW-1185">Reference proteome</keyword>
<keyword id="KW-0949">S-adenosyl-L-methionine</keyword>
<keyword id="KW-0808">Transferase</keyword>
<keyword id="KW-0819">tRNA processing</keyword>
<name>TRM56_IGNH4</name>
<proteinExistence type="inferred from homology"/>
<organism>
    <name type="scientific">Ignicoccus hospitalis (strain KIN4/I / DSM 18386 / JCM 14125)</name>
    <dbReference type="NCBI Taxonomy" id="453591"/>
    <lineage>
        <taxon>Archaea</taxon>
        <taxon>Thermoproteota</taxon>
        <taxon>Thermoprotei</taxon>
        <taxon>Desulfurococcales</taxon>
        <taxon>Desulfurococcaceae</taxon>
        <taxon>Ignicoccus</taxon>
    </lineage>
</organism>
<dbReference type="EC" id="2.1.1.206" evidence="1"/>
<dbReference type="EMBL" id="CP000816">
    <property type="protein sequence ID" value="ABU82300.1"/>
    <property type="molecule type" value="Genomic_DNA"/>
</dbReference>
<dbReference type="RefSeq" id="WP_012123264.1">
    <property type="nucleotide sequence ID" value="NC_009776.1"/>
</dbReference>
<dbReference type="SMR" id="A8ABJ8"/>
<dbReference type="STRING" id="453591.Igni_1123"/>
<dbReference type="GeneID" id="5561777"/>
<dbReference type="KEGG" id="iho:Igni_1123"/>
<dbReference type="eggNOG" id="arCOG01857">
    <property type="taxonomic scope" value="Archaea"/>
</dbReference>
<dbReference type="HOGENOM" id="CLU_123709_0_0_2"/>
<dbReference type="OrthoDB" id="14397at2157"/>
<dbReference type="PhylomeDB" id="A8ABJ8"/>
<dbReference type="Proteomes" id="UP000000262">
    <property type="component" value="Chromosome"/>
</dbReference>
<dbReference type="GO" id="GO:0005737">
    <property type="term" value="C:cytoplasm"/>
    <property type="evidence" value="ECO:0007669"/>
    <property type="project" value="UniProtKB-SubCell"/>
</dbReference>
<dbReference type="GO" id="GO:0106059">
    <property type="term" value="F:tRNA (cytidine(56)-2'-O)-methyltransferase activity"/>
    <property type="evidence" value="ECO:0007669"/>
    <property type="project" value="UniProtKB-EC"/>
</dbReference>
<dbReference type="GO" id="GO:0002128">
    <property type="term" value="P:tRNA nucleoside ribose methylation"/>
    <property type="evidence" value="ECO:0007669"/>
    <property type="project" value="UniProtKB-UniRule"/>
</dbReference>
<dbReference type="CDD" id="cd18083">
    <property type="entry name" value="aTrm56-like"/>
    <property type="match status" value="1"/>
</dbReference>
<dbReference type="Gene3D" id="3.40.1280.10">
    <property type="match status" value="1"/>
</dbReference>
<dbReference type="HAMAP" id="MF_00077">
    <property type="entry name" value="tRNA_methyltr_aTrm56"/>
    <property type="match status" value="1"/>
</dbReference>
<dbReference type="InterPro" id="IPR029028">
    <property type="entry name" value="Alpha/beta_knot_MTases"/>
</dbReference>
<dbReference type="InterPro" id="IPR029026">
    <property type="entry name" value="tRNA_m1G_MTases_N"/>
</dbReference>
<dbReference type="InterPro" id="IPR002845">
    <property type="entry name" value="tRNA_mtfrase_aTrm56"/>
</dbReference>
<dbReference type="PANTHER" id="PTHR42197">
    <property type="entry name" value="TRNA (CYTIDINE(56)-2'-O)-METHYLTRANSFERASE"/>
    <property type="match status" value="1"/>
</dbReference>
<dbReference type="PANTHER" id="PTHR42197:SF1">
    <property type="entry name" value="TRNA (CYTIDINE(56)-2'-O)-METHYLTRANSFERASE"/>
    <property type="match status" value="1"/>
</dbReference>
<dbReference type="Pfam" id="PF01994">
    <property type="entry name" value="Trm56"/>
    <property type="match status" value="1"/>
</dbReference>
<dbReference type="SUPFAM" id="SSF75217">
    <property type="entry name" value="alpha/beta knot"/>
    <property type="match status" value="1"/>
</dbReference>
<feature type="chain" id="PRO_0000365302" description="tRNA (cytidine(56)-2'-O)-methyltransferase">
    <location>
        <begin position="1"/>
        <end position="218"/>
    </location>
</feature>
<feature type="region of interest" description="Disordered" evidence="2">
    <location>
        <begin position="170"/>
        <end position="218"/>
    </location>
</feature>
<feature type="compositionally biased region" description="Basic and acidic residues" evidence="2">
    <location>
        <begin position="200"/>
        <end position="218"/>
    </location>
</feature>
<feature type="binding site" evidence="1">
    <location>
        <position position="81"/>
    </location>
    <ligand>
        <name>S-adenosyl-L-methionine</name>
        <dbReference type="ChEBI" id="CHEBI:59789"/>
    </ligand>
</feature>
<feature type="binding site" evidence="1">
    <location>
        <begin position="106"/>
        <end position="110"/>
    </location>
    <ligand>
        <name>S-adenosyl-L-methionine</name>
        <dbReference type="ChEBI" id="CHEBI:59789"/>
    </ligand>
</feature>
<feature type="binding site" evidence="1">
    <location>
        <begin position="124"/>
        <end position="131"/>
    </location>
    <ligand>
        <name>S-adenosyl-L-methionine</name>
        <dbReference type="ChEBI" id="CHEBI:59789"/>
    </ligand>
</feature>
<gene>
    <name type="ordered locus">Igni_1123</name>
</gene>
<evidence type="ECO:0000255" key="1">
    <source>
        <dbReference type="HAMAP-Rule" id="MF_00077"/>
    </source>
</evidence>
<evidence type="ECO:0000256" key="2">
    <source>
        <dbReference type="SAM" id="MobiDB-lite"/>
    </source>
</evidence>
<reference key="1">
    <citation type="journal article" date="2008" name="Genome Biol.">
        <title>A genomic analysis of the archaeal system Ignicoccus hospitalis-Nanoarchaeum equitans.</title>
        <authorList>
            <person name="Podar M."/>
            <person name="Anderson I."/>
            <person name="Makarova K.S."/>
            <person name="Elkins J.G."/>
            <person name="Ivanova N."/>
            <person name="Wall M.A."/>
            <person name="Lykidis A."/>
            <person name="Mavromatis K."/>
            <person name="Sun H."/>
            <person name="Hudson M.E."/>
            <person name="Chen W."/>
            <person name="Deciu C."/>
            <person name="Hutchison D."/>
            <person name="Eads J.R."/>
            <person name="Anderson A."/>
            <person name="Fernandes F."/>
            <person name="Szeto E."/>
            <person name="Lapidus A."/>
            <person name="Kyrpides N.C."/>
            <person name="Saier M.H. Jr."/>
            <person name="Richardson P.M."/>
            <person name="Rachel R."/>
            <person name="Huber H."/>
            <person name="Eisen J.A."/>
            <person name="Koonin E.V."/>
            <person name="Keller M."/>
            <person name="Stetter K.O."/>
        </authorList>
    </citation>
    <scope>NUCLEOTIDE SEQUENCE [LARGE SCALE GENOMIC DNA]</scope>
    <source>
        <strain>KIN4/I / DSM 18386 / JCM 14125</strain>
    </source>
</reference>
<comment type="function">
    <text evidence="1">Specifically catalyzes the AdoMet-dependent 2'-O-ribose methylation of cytidine at position 56 in tRNAs.</text>
</comment>
<comment type="catalytic activity">
    <reaction evidence="1">
        <text>cytidine(56) in tRNA + S-adenosyl-L-methionine = 2'-O-methylcytidine(56) in tRNA + S-adenosyl-L-homocysteine + H(+)</text>
        <dbReference type="Rhea" id="RHEA:42968"/>
        <dbReference type="Rhea" id="RHEA-COMP:10308"/>
        <dbReference type="Rhea" id="RHEA-COMP:10309"/>
        <dbReference type="ChEBI" id="CHEBI:15378"/>
        <dbReference type="ChEBI" id="CHEBI:57856"/>
        <dbReference type="ChEBI" id="CHEBI:59789"/>
        <dbReference type="ChEBI" id="CHEBI:74495"/>
        <dbReference type="ChEBI" id="CHEBI:82748"/>
        <dbReference type="EC" id="2.1.1.206"/>
    </reaction>
</comment>
<comment type="subunit">
    <text evidence="1">Homodimer.</text>
</comment>
<comment type="subcellular location">
    <subcellularLocation>
        <location evidence="1">Cytoplasm</location>
    </subcellularLocation>
</comment>
<comment type="similarity">
    <text evidence="1">Belongs to the aTrm56 family.</text>
</comment>
<sequence>MKVYVLRIGHRPDRDKRITTHVGLVARAFGAHGFVLSPCDEKVLEKLRDVEERWGRLLEEIACTNSPLKYVKTWDGTVVHLTMYGLPVDSVIDEIRQKDKILVIVGAEKVPREYYELAHYNVAIGNQPHSEVAALAIFLDRLYGGAELYRQPVGGKLRIIPTEKGKKVVKVGEEGPSGGAPGVRAERGRGGRGEGVQGADEVRGHKRGATDRDLGDET</sequence>
<accession>A8ABJ8</accession>
<protein>
    <recommendedName>
        <fullName evidence="1">tRNA (cytidine(56)-2'-O)-methyltransferase</fullName>
        <ecNumber evidence="1">2.1.1.206</ecNumber>
    </recommendedName>
    <alternativeName>
        <fullName evidence="1">tRNA ribose 2'-O-methyltransferase aTrm56</fullName>
    </alternativeName>
</protein>